<protein>
    <recommendedName>
        <fullName evidence="1">Probable nicotinate-nucleotide adenylyltransferase</fullName>
        <ecNumber evidence="1">2.7.7.18</ecNumber>
    </recommendedName>
    <alternativeName>
        <fullName evidence="1">Deamido-NAD(+) diphosphorylase</fullName>
    </alternativeName>
    <alternativeName>
        <fullName evidence="1">Deamido-NAD(+) pyrophosphorylase</fullName>
    </alternativeName>
    <alternativeName>
        <fullName evidence="1">Nicotinate mononucleotide adenylyltransferase</fullName>
        <shortName evidence="1">NaMN adenylyltransferase</shortName>
    </alternativeName>
</protein>
<proteinExistence type="inferred from homology"/>
<keyword id="KW-0067">ATP-binding</keyword>
<keyword id="KW-0520">NAD</keyword>
<keyword id="KW-0547">Nucleotide-binding</keyword>
<keyword id="KW-0548">Nucleotidyltransferase</keyword>
<keyword id="KW-0662">Pyridine nucleotide biosynthesis</keyword>
<keyword id="KW-1185">Reference proteome</keyword>
<keyword id="KW-0808">Transferase</keyword>
<comment type="function">
    <text evidence="1">Catalyzes the reversible adenylation of nicotinate mononucleotide (NaMN) to nicotinic acid adenine dinucleotide (NaAD).</text>
</comment>
<comment type="catalytic activity">
    <reaction evidence="1">
        <text>nicotinate beta-D-ribonucleotide + ATP + H(+) = deamido-NAD(+) + diphosphate</text>
        <dbReference type="Rhea" id="RHEA:22860"/>
        <dbReference type="ChEBI" id="CHEBI:15378"/>
        <dbReference type="ChEBI" id="CHEBI:30616"/>
        <dbReference type="ChEBI" id="CHEBI:33019"/>
        <dbReference type="ChEBI" id="CHEBI:57502"/>
        <dbReference type="ChEBI" id="CHEBI:58437"/>
        <dbReference type="EC" id="2.7.7.18"/>
    </reaction>
</comment>
<comment type="pathway">
    <text evidence="1">Cofactor biosynthesis; NAD(+) biosynthesis; deamido-NAD(+) from nicotinate D-ribonucleotide: step 1/1.</text>
</comment>
<comment type="similarity">
    <text evidence="1">Belongs to the NadD family.</text>
</comment>
<evidence type="ECO:0000255" key="1">
    <source>
        <dbReference type="HAMAP-Rule" id="MF_00244"/>
    </source>
</evidence>
<reference key="1">
    <citation type="journal article" date="2008" name="PLoS ONE">
        <title>Survival in nuclear waste, extreme resistance, and potential applications gleaned from the genome sequence of Kineococcus radiotolerans SRS30216.</title>
        <authorList>
            <person name="Bagwell C.E."/>
            <person name="Bhat S."/>
            <person name="Hawkins G.M."/>
            <person name="Smith B.W."/>
            <person name="Biswas T."/>
            <person name="Hoover T.R."/>
            <person name="Saunders E."/>
            <person name="Han C.S."/>
            <person name="Tsodikov O.V."/>
            <person name="Shimkets L.J."/>
        </authorList>
    </citation>
    <scope>NUCLEOTIDE SEQUENCE [LARGE SCALE GENOMIC DNA]</scope>
    <source>
        <strain>ATCC BAA-149 / DSM 14245 / SRS30216</strain>
    </source>
</reference>
<gene>
    <name evidence="1" type="primary">nadD</name>
    <name type="ordered locus">Krad_3450</name>
</gene>
<accession>A6WDM4</accession>
<sequence>MGGTFDPIHHGHLVAASEVAARFALDEVVFVPTGKPWQKSRVDIAPAEHRYLMTVIATASNPRFTVSRIDIDRGGFTYTIDTLRELRDLRPEADLFFITGADALAQILQWKDVAELWSLAHFVGVSRPGHALTDDGLPLDGVSLMEVPALSISSTDCRQRVAEGLPVWYLVPDGVVQHISKHRLYTAPEHGRLLDARGEALAVGESGD</sequence>
<organism>
    <name type="scientific">Kineococcus radiotolerans (strain ATCC BAA-149 / DSM 14245 / SRS30216)</name>
    <dbReference type="NCBI Taxonomy" id="266940"/>
    <lineage>
        <taxon>Bacteria</taxon>
        <taxon>Bacillati</taxon>
        <taxon>Actinomycetota</taxon>
        <taxon>Actinomycetes</taxon>
        <taxon>Kineosporiales</taxon>
        <taxon>Kineosporiaceae</taxon>
        <taxon>Kineococcus</taxon>
    </lineage>
</organism>
<name>NADD_KINRD</name>
<feature type="chain" id="PRO_1000100782" description="Probable nicotinate-nucleotide adenylyltransferase">
    <location>
        <begin position="1"/>
        <end position="208"/>
    </location>
</feature>
<dbReference type="EC" id="2.7.7.18" evidence="1"/>
<dbReference type="EMBL" id="CP000750">
    <property type="protein sequence ID" value="ABS04913.1"/>
    <property type="molecule type" value="Genomic_DNA"/>
</dbReference>
<dbReference type="SMR" id="A6WDM4"/>
<dbReference type="STRING" id="266940.Krad_3450"/>
<dbReference type="KEGG" id="kra:Krad_3450"/>
<dbReference type="eggNOG" id="COG1057">
    <property type="taxonomic scope" value="Bacteria"/>
</dbReference>
<dbReference type="HOGENOM" id="CLU_069765_1_1_11"/>
<dbReference type="UniPathway" id="UPA00253">
    <property type="reaction ID" value="UER00332"/>
</dbReference>
<dbReference type="Proteomes" id="UP000001116">
    <property type="component" value="Chromosome"/>
</dbReference>
<dbReference type="GO" id="GO:0005524">
    <property type="term" value="F:ATP binding"/>
    <property type="evidence" value="ECO:0007669"/>
    <property type="project" value="UniProtKB-KW"/>
</dbReference>
<dbReference type="GO" id="GO:0004515">
    <property type="term" value="F:nicotinate-nucleotide adenylyltransferase activity"/>
    <property type="evidence" value="ECO:0007669"/>
    <property type="project" value="UniProtKB-UniRule"/>
</dbReference>
<dbReference type="GO" id="GO:0009435">
    <property type="term" value="P:NAD biosynthetic process"/>
    <property type="evidence" value="ECO:0007669"/>
    <property type="project" value="UniProtKB-UniRule"/>
</dbReference>
<dbReference type="CDD" id="cd02165">
    <property type="entry name" value="NMNAT"/>
    <property type="match status" value="1"/>
</dbReference>
<dbReference type="FunFam" id="3.40.50.620:FF:000039">
    <property type="entry name" value="Probable nicotinate-nucleotide adenylyltransferase"/>
    <property type="match status" value="1"/>
</dbReference>
<dbReference type="Gene3D" id="3.40.50.620">
    <property type="entry name" value="HUPs"/>
    <property type="match status" value="1"/>
</dbReference>
<dbReference type="HAMAP" id="MF_00244">
    <property type="entry name" value="NaMN_adenylyltr"/>
    <property type="match status" value="1"/>
</dbReference>
<dbReference type="InterPro" id="IPR004821">
    <property type="entry name" value="Cyt_trans-like"/>
</dbReference>
<dbReference type="InterPro" id="IPR005248">
    <property type="entry name" value="NadD/NMNAT"/>
</dbReference>
<dbReference type="InterPro" id="IPR014729">
    <property type="entry name" value="Rossmann-like_a/b/a_fold"/>
</dbReference>
<dbReference type="NCBIfam" id="TIGR00125">
    <property type="entry name" value="cyt_tran_rel"/>
    <property type="match status" value="1"/>
</dbReference>
<dbReference type="NCBIfam" id="TIGR00482">
    <property type="entry name" value="nicotinate (nicotinamide) nucleotide adenylyltransferase"/>
    <property type="match status" value="1"/>
</dbReference>
<dbReference type="NCBIfam" id="NF000840">
    <property type="entry name" value="PRK00071.1-3"/>
    <property type="match status" value="1"/>
</dbReference>
<dbReference type="PANTHER" id="PTHR39321">
    <property type="entry name" value="NICOTINATE-NUCLEOTIDE ADENYLYLTRANSFERASE-RELATED"/>
    <property type="match status" value="1"/>
</dbReference>
<dbReference type="PANTHER" id="PTHR39321:SF3">
    <property type="entry name" value="PHOSPHOPANTETHEINE ADENYLYLTRANSFERASE"/>
    <property type="match status" value="1"/>
</dbReference>
<dbReference type="Pfam" id="PF01467">
    <property type="entry name" value="CTP_transf_like"/>
    <property type="match status" value="1"/>
</dbReference>
<dbReference type="SUPFAM" id="SSF52374">
    <property type="entry name" value="Nucleotidylyl transferase"/>
    <property type="match status" value="1"/>
</dbReference>